<dbReference type="EC" id="2.4.2.43"/>
<dbReference type="EMBL" id="AF336802">
    <property type="protein sequence ID" value="AAK69644.1"/>
    <property type="molecule type" value="Genomic_DNA"/>
</dbReference>
<dbReference type="EMBL" id="BX936398">
    <property type="protein sequence ID" value="CAH21564.1"/>
    <property type="molecule type" value="Genomic_DNA"/>
</dbReference>
<dbReference type="RefSeq" id="WP_002211821.1">
    <property type="nucleotide sequence ID" value="NZ_CP009712.1"/>
</dbReference>
<dbReference type="SMR" id="Q66A06"/>
<dbReference type="CAZy" id="GT83">
    <property type="family name" value="Glycosyltransferase Family 83"/>
</dbReference>
<dbReference type="GeneID" id="57976259"/>
<dbReference type="KEGG" id="ypo:BZ17_128"/>
<dbReference type="KEGG" id="yps:YPTB2326"/>
<dbReference type="PATRIC" id="fig|273123.14.peg.137"/>
<dbReference type="UniPathway" id="UPA00037"/>
<dbReference type="Proteomes" id="UP000001011">
    <property type="component" value="Chromosome"/>
</dbReference>
<dbReference type="GO" id="GO:0005886">
    <property type="term" value="C:plasma membrane"/>
    <property type="evidence" value="ECO:0007669"/>
    <property type="project" value="UniProtKB-SubCell"/>
</dbReference>
<dbReference type="GO" id="GO:0103015">
    <property type="term" value="F:4-amino-4-deoxy-L-arabinose transferase activity"/>
    <property type="evidence" value="ECO:0007669"/>
    <property type="project" value="UniProtKB-EC"/>
</dbReference>
<dbReference type="GO" id="GO:0000030">
    <property type="term" value="F:mannosyltransferase activity"/>
    <property type="evidence" value="ECO:0007669"/>
    <property type="project" value="InterPro"/>
</dbReference>
<dbReference type="GO" id="GO:0009245">
    <property type="term" value="P:lipid A biosynthetic process"/>
    <property type="evidence" value="ECO:0007669"/>
    <property type="project" value="UniProtKB-UniRule"/>
</dbReference>
<dbReference type="GO" id="GO:0009103">
    <property type="term" value="P:lipopolysaccharide biosynthetic process"/>
    <property type="evidence" value="ECO:0007669"/>
    <property type="project" value="UniProtKB-KW"/>
</dbReference>
<dbReference type="GO" id="GO:0006493">
    <property type="term" value="P:protein O-linked glycosylation"/>
    <property type="evidence" value="ECO:0007669"/>
    <property type="project" value="InterPro"/>
</dbReference>
<dbReference type="GO" id="GO:0010041">
    <property type="term" value="P:response to iron(III) ion"/>
    <property type="evidence" value="ECO:0007669"/>
    <property type="project" value="TreeGrafter"/>
</dbReference>
<dbReference type="HAMAP" id="MF_01165">
    <property type="entry name" value="ArnT_transfer"/>
    <property type="match status" value="1"/>
</dbReference>
<dbReference type="InterPro" id="IPR022839">
    <property type="entry name" value="ArnT_tfrase"/>
</dbReference>
<dbReference type="InterPro" id="IPR003342">
    <property type="entry name" value="Glyco_trans_39/83"/>
</dbReference>
<dbReference type="InterPro" id="IPR050297">
    <property type="entry name" value="LipidA_mod_glycosyltrf_83"/>
</dbReference>
<dbReference type="NCBIfam" id="NF009784">
    <property type="entry name" value="PRK13279.1"/>
    <property type="match status" value="1"/>
</dbReference>
<dbReference type="PANTHER" id="PTHR33908">
    <property type="entry name" value="MANNOSYLTRANSFERASE YKCB-RELATED"/>
    <property type="match status" value="1"/>
</dbReference>
<dbReference type="PANTHER" id="PTHR33908:SF3">
    <property type="entry name" value="UNDECAPRENYL PHOSPHATE-ALPHA-4-AMINO-4-DEOXY-L-ARABINOSE ARABINOSYL TRANSFERASE"/>
    <property type="match status" value="1"/>
</dbReference>
<dbReference type="Pfam" id="PF02366">
    <property type="entry name" value="PMT"/>
    <property type="match status" value="1"/>
</dbReference>
<organism>
    <name type="scientific">Yersinia pseudotuberculosis serotype I (strain IP32953)</name>
    <dbReference type="NCBI Taxonomy" id="273123"/>
    <lineage>
        <taxon>Bacteria</taxon>
        <taxon>Pseudomonadati</taxon>
        <taxon>Pseudomonadota</taxon>
        <taxon>Gammaproteobacteria</taxon>
        <taxon>Enterobacterales</taxon>
        <taxon>Yersiniaceae</taxon>
        <taxon>Yersinia</taxon>
    </lineage>
</organism>
<protein>
    <recommendedName>
        <fullName>Undecaprenyl phosphate-alpha-4-amino-4-deoxy-L-arabinose arabinosyl transferase</fullName>
        <ecNumber>2.4.2.43</ecNumber>
    </recommendedName>
    <alternativeName>
        <fullName>4-amino-4-deoxy-L-arabinose lipid A transferase</fullName>
    </alternativeName>
    <alternativeName>
        <fullName>Lipid IV(A) 4-amino-4-deoxy-L-arabinosyltransferase</fullName>
    </alternativeName>
    <alternativeName>
        <fullName>Polymyxin resistance protein PmrK</fullName>
    </alternativeName>
    <alternativeName>
        <fullName>Undecaprenyl phosphate-alpha-L-Ara4N transferase</fullName>
    </alternativeName>
</protein>
<gene>
    <name type="primary">arnT</name>
    <name type="synonym">pmrK</name>
    <name type="ordered locus">YPTB2326</name>
</gene>
<proteinExistence type="evidence at transcript level"/>
<reference key="1">
    <citation type="journal article" date="2004" name="Microbiology">
        <title>The pmrF polymyxin-resistance operon of Yersinia pseudotuberculosis is upregulated by the PhoP-PhoQ two-component system but not by PmrA-PmrB, and is not required for virulence.</title>
        <authorList>
            <person name="Marceau M.B."/>
            <person name="Sebbane F."/>
            <person name="Ewann F."/>
            <person name="Collyn F."/>
            <person name="Lindner B."/>
            <person name="Campos M.A."/>
            <person name="Bengoechea J.-A."/>
            <person name="Simonet M."/>
        </authorList>
    </citation>
    <scope>NUCLEOTIDE SEQUENCE [GENOMIC DNA]</scope>
    <scope>INDUCTION</scope>
    <source>
        <strain>32777 / IP2777 / Serotype O1:b</strain>
    </source>
</reference>
<reference key="2">
    <citation type="journal article" date="2004" name="Proc. Natl. Acad. Sci. U.S.A.">
        <title>Insights into the evolution of Yersinia pestis through whole-genome comparison with Yersinia pseudotuberculosis.</title>
        <authorList>
            <person name="Chain P.S.G."/>
            <person name="Carniel E."/>
            <person name="Larimer F.W."/>
            <person name="Lamerdin J."/>
            <person name="Stoutland P.O."/>
            <person name="Regala W.M."/>
            <person name="Georgescu A.M."/>
            <person name="Vergez L.M."/>
            <person name="Land M.L."/>
            <person name="Motin V.L."/>
            <person name="Brubaker R.R."/>
            <person name="Fowler J."/>
            <person name="Hinnebusch J."/>
            <person name="Marceau M."/>
            <person name="Medigue C."/>
            <person name="Simonet M."/>
            <person name="Chenal-Francisque V."/>
            <person name="Souza B."/>
            <person name="Dacheux D."/>
            <person name="Elliott J.M."/>
            <person name="Derbise A."/>
            <person name="Hauser L.J."/>
            <person name="Garcia E."/>
        </authorList>
    </citation>
    <scope>NUCLEOTIDE SEQUENCE [LARGE SCALE GENOMIC DNA]</scope>
    <source>
        <strain>IP32953</strain>
    </source>
</reference>
<name>ARNT_YERPS</name>
<evidence type="ECO:0000250" key="1"/>
<evidence type="ECO:0000255" key="2"/>
<evidence type="ECO:0000269" key="3">
    <source>
    </source>
</evidence>
<evidence type="ECO:0000305" key="4"/>
<keyword id="KW-0997">Cell inner membrane</keyword>
<keyword id="KW-1003">Cell membrane</keyword>
<keyword id="KW-0328">Glycosyltransferase</keyword>
<keyword id="KW-0441">Lipid A biosynthesis</keyword>
<keyword id="KW-0444">Lipid biosynthesis</keyword>
<keyword id="KW-0443">Lipid metabolism</keyword>
<keyword id="KW-0448">Lipopolysaccharide biosynthesis</keyword>
<keyword id="KW-0472">Membrane</keyword>
<keyword id="KW-0808">Transferase</keyword>
<keyword id="KW-0812">Transmembrane</keyword>
<keyword id="KW-1133">Transmembrane helix</keyword>
<comment type="function">
    <text evidence="1">Catalyzes the transfer of the L-Ara4N moiety of the glycolipid undecaprenyl phosphate-alpha-L-Ara4N to lipid A. The modified arabinose is attached to lipid A and is required for resistance to polymyxin and cationic antimicrobial peptides (By similarity).</text>
</comment>
<comment type="catalytic activity">
    <reaction>
        <text>4-amino-4-deoxy-alpha-L-arabinopyranosyl di-trans,octa-cis-undecaprenyl phosphate + lipid IVA = lipid IIA + di-trans,octa-cis-undecaprenyl phosphate.</text>
        <dbReference type="EC" id="2.4.2.43"/>
    </reaction>
</comment>
<comment type="pathway">
    <text>Lipopolysaccharide metabolism; 4-amino-4-deoxy-beta-L-arabinose-lipid A biosynthesis.</text>
</comment>
<comment type="subcellular location">
    <subcellularLocation>
        <location evidence="1">Cell inner membrane</location>
        <topology evidence="1">Multi-pass membrane protein</topology>
    </subcellularLocation>
</comment>
<comment type="induction">
    <text evidence="3">Activated by low magnesium concentrations, via the two-component regulatory system PhoP/PhoQ.</text>
</comment>
<comment type="similarity">
    <text evidence="4">Belongs to the glycosyltransferase 83 family.</text>
</comment>
<feature type="chain" id="PRO_0000121516" description="Undecaprenyl phosphate-alpha-4-amino-4-deoxy-L-arabinose arabinosyl transferase">
    <location>
        <begin position="1"/>
        <end position="554"/>
    </location>
</feature>
<feature type="transmembrane region" description="Helical" evidence="2">
    <location>
        <begin position="87"/>
        <end position="107"/>
    </location>
</feature>
<feature type="transmembrane region" description="Helical" evidence="2">
    <location>
        <begin position="115"/>
        <end position="135"/>
    </location>
</feature>
<feature type="transmembrane region" description="Helical" evidence="2">
    <location>
        <begin position="178"/>
        <end position="198"/>
    </location>
</feature>
<feature type="transmembrane region" description="Helical" evidence="2">
    <location>
        <begin position="206"/>
        <end position="226"/>
    </location>
</feature>
<feature type="transmembrane region" description="Helical" evidence="2">
    <location>
        <begin position="262"/>
        <end position="282"/>
    </location>
</feature>
<feature type="transmembrane region" description="Helical" evidence="2">
    <location>
        <begin position="293"/>
        <end position="313"/>
    </location>
</feature>
<feature type="transmembrane region" description="Helical" evidence="2">
    <location>
        <begin position="315"/>
        <end position="335"/>
    </location>
</feature>
<feature type="transmembrane region" description="Helical" evidence="2">
    <location>
        <begin position="351"/>
        <end position="371"/>
    </location>
</feature>
<feature type="transmembrane region" description="Helical" evidence="2">
    <location>
        <begin position="384"/>
        <end position="404"/>
    </location>
</feature>
<feature type="transmembrane region" description="Helical" evidence="2">
    <location>
        <begin position="414"/>
        <end position="434"/>
    </location>
</feature>
<feature type="sequence conflict" description="In Ref. 1; AAK69644." evidence="4" ref="1">
    <original>E</original>
    <variation>K</variation>
    <location>
        <position position="514"/>
    </location>
</feature>
<sequence>MKLLKDSGAALLALFFVLVYLLPVNSRLLWQPDETRYAEISREMLQRGDWVVPYFMDIRYFEKPVAGYWFNNISQWIFGDSNFAVRFGSIFSTALSAVLVYWLATLLWRNRSTSVLATLIYLSFLLVFGIGTYAVLDPMISLWLTAAMVSFYLTLKAENWQQKVGAYALLGVACGMGFMTKGFLALAVPVIAVLPIVIQQKRIKDLVVFGPIAIVCAVLLSLPWALAIAQREPDFWNYFFWVEHIQRFAEASAQHKSPIWYYLPILCIGVLPWLGLLPGALFKGWRERATKPELFFLLSWVVMPLLFFSVAKGKLPTYILPCMAPLSLLMAAYATDCANNIRMRALKINGVINLLFGVACALVIVVIGLGLVKDIVAYGPQENQKVWLGVLAFAGWGVTGFITLRNNARNWRWAAACPLLFILLVGYLIPQQVVDSKQPQNFIKNNFSELSSSRYVLTDSVGVAAGLAWELKRSDILMFSEKGELTYGLAYPDSQDNYISNDDFPTWLAQARKEGDVSLVVQLAKNEALPAHLPPADKVNLMNRLALLWYQKTP</sequence>
<accession>Q66A06</accession>
<accession>Q93PD6</accession>